<accession>B7GWX1</accession>
<comment type="function">
    <text evidence="1">Required for the first step of histidine biosynthesis. May allow the feedback regulation of ATP phosphoribosyltransferase activity by histidine.</text>
</comment>
<comment type="pathway">
    <text evidence="1">Amino-acid biosynthesis; L-histidine biosynthesis; L-histidine from 5-phospho-alpha-D-ribose 1-diphosphate: step 1/9.</text>
</comment>
<comment type="subunit">
    <text evidence="1">Heteromultimer composed of HisG and HisZ subunits.</text>
</comment>
<comment type="subcellular location">
    <subcellularLocation>
        <location evidence="1">Cytoplasm</location>
    </subcellularLocation>
</comment>
<comment type="miscellaneous">
    <text>This function is generally fulfilled by the C-terminal part of HisG, which is missing in some bacteria such as this one.</text>
</comment>
<comment type="similarity">
    <text evidence="1">Belongs to the class-II aminoacyl-tRNA synthetase family. HisZ subfamily.</text>
</comment>
<sequence length="388" mass="42861">MTISETWLLPDGVADVLPEQAQVIEKLRREAIDFLAVRGYQLVYTPFIEYIESLSSLSESNQDLDLVTFKVIDQLSGRLLGIRADMTPQVARIDAHVRPVEGVARYCYAGTVLHTKPQNFNATRAPLQLGAELYGHDSIEADVEMVDVMLGLIENAYTLQGAHLDLGHVGLFRSLVKYAGLSKNEEHELSDLYQRKALPELAEFTQNLNMGSDFYALGRYASDLDALQAHLSADILKDAEFDAALNALKTTLEQIKNRWPALNVGIDVVELRSYHYHTGLMYAVYAPNRAAPLAQGGRYDGIGEHFGRARPATGFSCDLYALGANQFAEIETVVAPKGTEADLLKAIANARSEGLRVVQLLGNDDLSSIPYATHQLVLQNGQWNIEKI</sequence>
<protein>
    <recommendedName>
        <fullName evidence="1">ATP phosphoribosyltransferase regulatory subunit</fullName>
    </recommendedName>
</protein>
<feature type="chain" id="PRO_1000117667" description="ATP phosphoribosyltransferase regulatory subunit">
    <location>
        <begin position="1"/>
        <end position="388"/>
    </location>
</feature>
<organism>
    <name type="scientific">Acinetobacter baumannii (strain AB307-0294)</name>
    <dbReference type="NCBI Taxonomy" id="557600"/>
    <lineage>
        <taxon>Bacteria</taxon>
        <taxon>Pseudomonadati</taxon>
        <taxon>Pseudomonadota</taxon>
        <taxon>Gammaproteobacteria</taxon>
        <taxon>Moraxellales</taxon>
        <taxon>Moraxellaceae</taxon>
        <taxon>Acinetobacter</taxon>
        <taxon>Acinetobacter calcoaceticus/baumannii complex</taxon>
    </lineage>
</organism>
<evidence type="ECO:0000255" key="1">
    <source>
        <dbReference type="HAMAP-Rule" id="MF_00125"/>
    </source>
</evidence>
<name>HISZ_ACIB3</name>
<proteinExistence type="inferred from homology"/>
<reference key="1">
    <citation type="journal article" date="2008" name="J. Bacteriol.">
        <title>Comparative genome sequence analysis of multidrug-resistant Acinetobacter baumannii.</title>
        <authorList>
            <person name="Adams M.D."/>
            <person name="Goglin K."/>
            <person name="Molyneaux N."/>
            <person name="Hujer K.M."/>
            <person name="Lavender H."/>
            <person name="Jamison J.J."/>
            <person name="MacDonald I.J."/>
            <person name="Martin K.M."/>
            <person name="Russo T."/>
            <person name="Campagnari A.A."/>
            <person name="Hujer A.M."/>
            <person name="Bonomo R.A."/>
            <person name="Gill S.R."/>
        </authorList>
    </citation>
    <scope>NUCLEOTIDE SEQUENCE [LARGE SCALE GENOMIC DNA]</scope>
    <source>
        <strain>AB307-0294</strain>
    </source>
</reference>
<keyword id="KW-0028">Amino-acid biosynthesis</keyword>
<keyword id="KW-0963">Cytoplasm</keyword>
<keyword id="KW-0368">Histidine biosynthesis</keyword>
<dbReference type="EMBL" id="CP001172">
    <property type="protein sequence ID" value="ACJ56619.1"/>
    <property type="molecule type" value="Genomic_DNA"/>
</dbReference>
<dbReference type="RefSeq" id="WP_000155680.1">
    <property type="nucleotide sequence ID" value="NZ_CP001172.1"/>
</dbReference>
<dbReference type="SMR" id="B7GWX1"/>
<dbReference type="HOGENOM" id="CLU_025113_0_1_6"/>
<dbReference type="UniPathway" id="UPA00031">
    <property type="reaction ID" value="UER00006"/>
</dbReference>
<dbReference type="Proteomes" id="UP000006924">
    <property type="component" value="Chromosome"/>
</dbReference>
<dbReference type="GO" id="GO:0005737">
    <property type="term" value="C:cytoplasm"/>
    <property type="evidence" value="ECO:0007669"/>
    <property type="project" value="UniProtKB-SubCell"/>
</dbReference>
<dbReference type="GO" id="GO:0000105">
    <property type="term" value="P:L-histidine biosynthetic process"/>
    <property type="evidence" value="ECO:0007669"/>
    <property type="project" value="UniProtKB-UniRule"/>
</dbReference>
<dbReference type="Gene3D" id="3.30.930.10">
    <property type="entry name" value="Bira Bifunctional Protein, Domain 2"/>
    <property type="match status" value="1"/>
</dbReference>
<dbReference type="HAMAP" id="MF_00125">
    <property type="entry name" value="HisZ"/>
    <property type="match status" value="1"/>
</dbReference>
<dbReference type="InterPro" id="IPR045864">
    <property type="entry name" value="aa-tRNA-synth_II/BPL/LPL"/>
</dbReference>
<dbReference type="InterPro" id="IPR041715">
    <property type="entry name" value="HisRS-like_core"/>
</dbReference>
<dbReference type="InterPro" id="IPR004516">
    <property type="entry name" value="HisRS/HisZ"/>
</dbReference>
<dbReference type="InterPro" id="IPR004517">
    <property type="entry name" value="HisZ"/>
</dbReference>
<dbReference type="NCBIfam" id="NF008935">
    <property type="entry name" value="PRK12292.1-1"/>
    <property type="match status" value="1"/>
</dbReference>
<dbReference type="NCBIfam" id="NF009086">
    <property type="entry name" value="PRK12421.1"/>
    <property type="match status" value="1"/>
</dbReference>
<dbReference type="PANTHER" id="PTHR11476:SF7">
    <property type="entry name" value="HISTIDINE--TRNA LIGASE"/>
    <property type="match status" value="1"/>
</dbReference>
<dbReference type="PANTHER" id="PTHR11476">
    <property type="entry name" value="HISTIDYL-TRNA SYNTHETASE"/>
    <property type="match status" value="1"/>
</dbReference>
<dbReference type="Pfam" id="PF13393">
    <property type="entry name" value="tRNA-synt_His"/>
    <property type="match status" value="1"/>
</dbReference>
<dbReference type="PIRSF" id="PIRSF001549">
    <property type="entry name" value="His-tRNA_synth"/>
    <property type="match status" value="1"/>
</dbReference>
<dbReference type="SUPFAM" id="SSF55681">
    <property type="entry name" value="Class II aaRS and biotin synthetases"/>
    <property type="match status" value="1"/>
</dbReference>
<gene>
    <name evidence="1" type="primary">hisZ</name>
    <name type="ordered locus">ABBFA_002400</name>
</gene>